<comment type="function">
    <text evidence="1">Part of a complex that catalyzes the reversible reduction of CoM-S-S-CoB to the thiol-coenzymes H-S-CoM (coenzyme M) and H-S-CoB (coenzyme B).</text>
</comment>
<comment type="catalytic activity">
    <reaction evidence="1">
        <text>coenzyme B + coenzyme M + 2 oxidized [2Fe-2S]-[ferredoxin] = coenzyme M-coenzyme B heterodisulfide + 2 reduced [2Fe-2S]-[ferredoxin] + 2 H(+)</text>
        <dbReference type="Rhea" id="RHEA:55160"/>
        <dbReference type="Rhea" id="RHEA-COMP:10000"/>
        <dbReference type="Rhea" id="RHEA-COMP:10001"/>
        <dbReference type="ChEBI" id="CHEBI:15378"/>
        <dbReference type="ChEBI" id="CHEBI:33737"/>
        <dbReference type="ChEBI" id="CHEBI:33738"/>
        <dbReference type="ChEBI" id="CHEBI:58319"/>
        <dbReference type="ChEBI" id="CHEBI:58411"/>
        <dbReference type="ChEBI" id="CHEBI:58596"/>
        <dbReference type="EC" id="1.8.7.3"/>
    </reaction>
</comment>
<comment type="cofactor">
    <cofactor evidence="2">
        <name>[4Fe-4S] cluster</name>
        <dbReference type="ChEBI" id="CHEBI:49883"/>
    </cofactor>
    <text evidence="2">Binds 2 [4Fe-4S] cluster.</text>
</comment>
<comment type="pathway">
    <text evidence="1">Cofactor metabolism; coenzyme M-coenzyme B heterodisulfide reduction; coenzyme B and coenzyme M from coenzyme M-coenzyme B heterodisulfide: step 1/1.</text>
</comment>
<comment type="subunit">
    <text evidence="1">The ferredoxin:CoB-CoM heterodisulfide reductase is composed of three subunits; HdrA, HdrB and HdrC.</text>
</comment>
<comment type="subcellular location">
    <subcellularLocation>
        <location evidence="1">Cytoplasm</location>
    </subcellularLocation>
</comment>
<comment type="similarity">
    <text evidence="3">Belongs to the HdrC family.</text>
</comment>
<dbReference type="EC" id="1.8.7.3" evidence="1"/>
<dbReference type="EMBL" id="AE008384">
    <property type="protein sequence ID" value="AAM30675.1"/>
    <property type="molecule type" value="Genomic_DNA"/>
</dbReference>
<dbReference type="RefSeq" id="WP_011032929.1">
    <property type="nucleotide sequence ID" value="NC_003901.1"/>
</dbReference>
<dbReference type="SMR" id="Q8PY84"/>
<dbReference type="TCDB" id="3.D.7.1.7">
    <property type="family name" value="the h2:heterodisulfide oxidoreductase (hho) family"/>
</dbReference>
<dbReference type="GeneID" id="82160003"/>
<dbReference type="KEGG" id="mma:MM_0979"/>
<dbReference type="PATRIC" id="fig|192952.21.peg.1154"/>
<dbReference type="eggNOG" id="arCOG00964">
    <property type="taxonomic scope" value="Archaea"/>
</dbReference>
<dbReference type="HOGENOM" id="CLU_121273_0_0_2"/>
<dbReference type="UniPathway" id="UPA00647">
    <property type="reaction ID" value="UER00700"/>
</dbReference>
<dbReference type="Proteomes" id="UP000000595">
    <property type="component" value="Chromosome"/>
</dbReference>
<dbReference type="GO" id="GO:0005737">
    <property type="term" value="C:cytoplasm"/>
    <property type="evidence" value="ECO:0007669"/>
    <property type="project" value="UniProtKB-SubCell"/>
</dbReference>
<dbReference type="GO" id="GO:0005886">
    <property type="term" value="C:plasma membrane"/>
    <property type="evidence" value="ECO:0007669"/>
    <property type="project" value="TreeGrafter"/>
</dbReference>
<dbReference type="GO" id="GO:0051539">
    <property type="term" value="F:4 iron, 4 sulfur cluster binding"/>
    <property type="evidence" value="ECO:0007669"/>
    <property type="project" value="UniProtKB-KW"/>
</dbReference>
<dbReference type="GO" id="GO:0051912">
    <property type="term" value="F:CoB--CoM heterodisulfide reductase activity"/>
    <property type="evidence" value="ECO:0007669"/>
    <property type="project" value="InterPro"/>
</dbReference>
<dbReference type="GO" id="GO:0046872">
    <property type="term" value="F:metal ion binding"/>
    <property type="evidence" value="ECO:0007669"/>
    <property type="project" value="UniProtKB-KW"/>
</dbReference>
<dbReference type="GO" id="GO:0015948">
    <property type="term" value="P:methanogenesis"/>
    <property type="evidence" value="ECO:0007669"/>
    <property type="project" value="UniProtKB-KW"/>
</dbReference>
<dbReference type="Gene3D" id="1.10.1060.10">
    <property type="entry name" value="Alpha-helical ferredoxin"/>
    <property type="match status" value="1"/>
</dbReference>
<dbReference type="InterPro" id="IPR017896">
    <property type="entry name" value="4Fe4S_Fe-S-bd"/>
</dbReference>
<dbReference type="InterPro" id="IPR017900">
    <property type="entry name" value="4Fe4S_Fe_S_CS"/>
</dbReference>
<dbReference type="InterPro" id="IPR017680">
    <property type="entry name" value="CoB/CoM_hetero-S_Rdtase_csu"/>
</dbReference>
<dbReference type="InterPro" id="IPR051460">
    <property type="entry name" value="HdrC_iron-sulfur_subunit"/>
</dbReference>
<dbReference type="InterPro" id="IPR009051">
    <property type="entry name" value="Helical_ferredxn"/>
</dbReference>
<dbReference type="NCBIfam" id="TIGR03290">
    <property type="entry name" value="CoB_CoM_SS_C"/>
    <property type="match status" value="1"/>
</dbReference>
<dbReference type="PANTHER" id="PTHR43255:SF1">
    <property type="entry name" value="IRON-SULFUR-BINDING OXIDOREDUCTASE FADF-RELATED"/>
    <property type="match status" value="1"/>
</dbReference>
<dbReference type="PANTHER" id="PTHR43255">
    <property type="entry name" value="IRON-SULFUR-BINDING OXIDOREDUCTASE FADF-RELATED-RELATED"/>
    <property type="match status" value="1"/>
</dbReference>
<dbReference type="Pfam" id="PF13183">
    <property type="entry name" value="Fer4_8"/>
    <property type="match status" value="1"/>
</dbReference>
<dbReference type="SUPFAM" id="SSF46548">
    <property type="entry name" value="alpha-helical ferredoxin"/>
    <property type="match status" value="1"/>
</dbReference>
<dbReference type="PROSITE" id="PS00198">
    <property type="entry name" value="4FE4S_FER_1"/>
    <property type="match status" value="2"/>
</dbReference>
<dbReference type="PROSITE" id="PS51379">
    <property type="entry name" value="4FE4S_FER_2"/>
    <property type="match status" value="2"/>
</dbReference>
<organism>
    <name type="scientific">Methanosarcina mazei (strain ATCC BAA-159 / DSM 3647 / Goe1 / Go1 / JCM 11833 / OCM 88)</name>
    <name type="common">Methanosarcina frisia</name>
    <dbReference type="NCBI Taxonomy" id="192952"/>
    <lineage>
        <taxon>Archaea</taxon>
        <taxon>Methanobacteriati</taxon>
        <taxon>Methanobacteriota</taxon>
        <taxon>Stenosarchaea group</taxon>
        <taxon>Methanomicrobia</taxon>
        <taxon>Methanosarcinales</taxon>
        <taxon>Methanosarcinaceae</taxon>
        <taxon>Methanosarcina</taxon>
    </lineage>
</organism>
<reference key="1">
    <citation type="journal article" date="2002" name="J. Mol. Microbiol. Biotechnol.">
        <title>The genome of Methanosarcina mazei: evidence for lateral gene transfer between Bacteria and Archaea.</title>
        <authorList>
            <person name="Deppenmeier U."/>
            <person name="Johann A."/>
            <person name="Hartsch T."/>
            <person name="Merkl R."/>
            <person name="Schmitz R.A."/>
            <person name="Martinez-Arias R."/>
            <person name="Henne A."/>
            <person name="Wiezer A."/>
            <person name="Baeumer S."/>
            <person name="Jacobi C."/>
            <person name="Brueggemann H."/>
            <person name="Lienard T."/>
            <person name="Christmann A."/>
            <person name="Boemecke M."/>
            <person name="Steckel S."/>
            <person name="Bhattacharyya A."/>
            <person name="Lykidis A."/>
            <person name="Overbeek R."/>
            <person name="Klenk H.-P."/>
            <person name="Gunsalus R.P."/>
            <person name="Fritz H.-J."/>
            <person name="Gottschalk G."/>
        </authorList>
    </citation>
    <scope>NUCLEOTIDE SEQUENCE [LARGE SCALE GENOMIC DNA]</scope>
    <source>
        <strain>ATCC BAA-159 / DSM 3647 / Goe1 / Go1 / JCM 11833 / OCM 88</strain>
    </source>
</reference>
<sequence>MSEELLKVLKAAGLDVLSCMHCGTCTGSCPSGRHTGLNTRRIIRDARKNRATVLSDDALWLCTTCYTCQERCPRGIPITDALLELRRLAVRKGFMRPEHRRVSELVLECGHAVPLDEETKKKREELGLDPIPETVQKYPEALEELKALLKTCKFDELAAEK</sequence>
<keyword id="KW-0004">4Fe-4S</keyword>
<keyword id="KW-0963">Cytoplasm</keyword>
<keyword id="KW-0408">Iron</keyword>
<keyword id="KW-0411">Iron-sulfur</keyword>
<keyword id="KW-0479">Metal-binding</keyword>
<keyword id="KW-0484">Methanogenesis</keyword>
<keyword id="KW-0560">Oxidoreductase</keyword>
<keyword id="KW-0677">Repeat</keyword>
<evidence type="ECO:0000250" key="1">
    <source>
        <dbReference type="UniProtKB" id="Q8TLB1"/>
    </source>
</evidence>
<evidence type="ECO:0000255" key="2">
    <source>
        <dbReference type="PROSITE-ProRule" id="PRU00711"/>
    </source>
</evidence>
<evidence type="ECO:0000305" key="3"/>
<proteinExistence type="inferred from homology"/>
<accession>Q8PY84</accession>
<protein>
    <recommendedName>
        <fullName evidence="1">Ferredoxin:CoB-CoM heterodisulfide reductase subunit C</fullName>
        <ecNumber evidence="1">1.8.7.3</ecNumber>
    </recommendedName>
</protein>
<gene>
    <name type="primary">hdrC</name>
    <name type="ordered locus">MM_0979</name>
</gene>
<name>HDRC_METMA</name>
<feature type="chain" id="PRO_0000150076" description="Ferredoxin:CoB-CoM heterodisulfide reductase subunit C">
    <location>
        <begin position="1"/>
        <end position="161"/>
    </location>
</feature>
<feature type="domain" description="4Fe-4S ferredoxin-type 1" evidence="2">
    <location>
        <begin position="10"/>
        <end position="40"/>
    </location>
</feature>
<feature type="domain" description="4Fe-4S ferredoxin-type 2" evidence="2">
    <location>
        <begin position="51"/>
        <end position="82"/>
    </location>
</feature>
<feature type="binding site" evidence="2">
    <location>
        <position position="19"/>
    </location>
    <ligand>
        <name>[4Fe-4S] cluster</name>
        <dbReference type="ChEBI" id="CHEBI:49883"/>
        <label>1</label>
    </ligand>
</feature>
<feature type="binding site" evidence="2">
    <location>
        <position position="22"/>
    </location>
    <ligand>
        <name>[4Fe-4S] cluster</name>
        <dbReference type="ChEBI" id="CHEBI:49883"/>
        <label>1</label>
    </ligand>
</feature>
<feature type="binding site" evidence="2">
    <location>
        <position position="25"/>
    </location>
    <ligand>
        <name>[4Fe-4S] cluster</name>
        <dbReference type="ChEBI" id="CHEBI:49883"/>
        <label>1</label>
    </ligand>
</feature>
<feature type="binding site" evidence="2">
    <location>
        <position position="29"/>
    </location>
    <ligand>
        <name>[4Fe-4S] cluster</name>
        <dbReference type="ChEBI" id="CHEBI:49883"/>
        <label>2</label>
    </ligand>
</feature>
<feature type="binding site" evidence="2">
    <location>
        <position position="62"/>
    </location>
    <ligand>
        <name>[4Fe-4S] cluster</name>
        <dbReference type="ChEBI" id="CHEBI:49883"/>
        <label>2</label>
    </ligand>
</feature>
<feature type="binding site" evidence="2">
    <location>
        <position position="65"/>
    </location>
    <ligand>
        <name>[4Fe-4S] cluster</name>
        <dbReference type="ChEBI" id="CHEBI:49883"/>
        <label>2</label>
    </ligand>
</feature>
<feature type="binding site" evidence="2">
    <location>
        <position position="68"/>
    </location>
    <ligand>
        <name>[4Fe-4S] cluster</name>
        <dbReference type="ChEBI" id="CHEBI:49883"/>
        <label>2</label>
    </ligand>
</feature>
<feature type="binding site" evidence="2">
    <location>
        <position position="72"/>
    </location>
    <ligand>
        <name>[4Fe-4S] cluster</name>
        <dbReference type="ChEBI" id="CHEBI:49883"/>
        <label>1</label>
    </ligand>
</feature>